<name>RECO_STRPN</name>
<sequence length="256" mass="29787">MIQSITSQGLVLYNRNFREDDKLVKIFTEQVGKRMFFVKHAGQSKLAPVIQPLVLARFLLRINDDGLSYIEDYHEVMTFPKINSDLFVMAYATYVAALADASLQDNQQDAPLFAFLQKTLELMEAGLDYQVLTNIFEIQILTRFGISLNFNECVFCHRVGQAFDFSFKYGACLCPEHYHEDKRRCHLNPNIPYLLNQFQAIDFETLETISLKPGIKQELRQFMDQLYEEYVGIHLKSKKFIDSLADWGQLLKEEKK</sequence>
<feature type="chain" id="PRO_0000205009" description="DNA repair protein RecO">
    <location>
        <begin position="1"/>
        <end position="256"/>
    </location>
</feature>
<evidence type="ECO:0000250" key="1"/>
<evidence type="ECO:0000305" key="2"/>
<reference key="1">
    <citation type="journal article" date="2001" name="Science">
        <title>Complete genome sequence of a virulent isolate of Streptococcus pneumoniae.</title>
        <authorList>
            <person name="Tettelin H."/>
            <person name="Nelson K.E."/>
            <person name="Paulsen I.T."/>
            <person name="Eisen J.A."/>
            <person name="Read T.D."/>
            <person name="Peterson S.N."/>
            <person name="Heidelberg J.F."/>
            <person name="DeBoy R.T."/>
            <person name="Haft D.H."/>
            <person name="Dodson R.J."/>
            <person name="Durkin A.S."/>
            <person name="Gwinn M.L."/>
            <person name="Kolonay J.F."/>
            <person name="Nelson W.C."/>
            <person name="Peterson J.D."/>
            <person name="Umayam L.A."/>
            <person name="White O."/>
            <person name="Salzberg S.L."/>
            <person name="Lewis M.R."/>
            <person name="Radune D."/>
            <person name="Holtzapple E.K."/>
            <person name="Khouri H.M."/>
            <person name="Wolf A.M."/>
            <person name="Utterback T.R."/>
            <person name="Hansen C.L."/>
            <person name="McDonald L.A."/>
            <person name="Feldblyum T.V."/>
            <person name="Angiuoli S.V."/>
            <person name="Dickinson T."/>
            <person name="Hickey E.K."/>
            <person name="Holt I.E."/>
            <person name="Loftus B.J."/>
            <person name="Yang F."/>
            <person name="Smith H.O."/>
            <person name="Venter J.C."/>
            <person name="Dougherty B.A."/>
            <person name="Morrison D.A."/>
            <person name="Hollingshead S.K."/>
            <person name="Fraser C.M."/>
        </authorList>
    </citation>
    <scope>NUCLEOTIDE SEQUENCE [LARGE SCALE GENOMIC DNA]</scope>
    <source>
        <strain>ATCC BAA-334 / TIGR4</strain>
    </source>
</reference>
<comment type="function">
    <text evidence="1">Involved in DNA repair and RecF pathway recombination.</text>
</comment>
<comment type="similarity">
    <text evidence="2">Belongs to the RecO family.</text>
</comment>
<dbReference type="EMBL" id="AE005672">
    <property type="protein sequence ID" value="AAK74226.1"/>
    <property type="molecule type" value="Genomic_DNA"/>
</dbReference>
<dbReference type="PIR" id="A95004">
    <property type="entry name" value="A95004"/>
</dbReference>
<dbReference type="RefSeq" id="WP_000616164.1">
    <property type="nucleotide sequence ID" value="NZ_CP155539.1"/>
</dbReference>
<dbReference type="SMR" id="Q97TA7"/>
<dbReference type="PaxDb" id="170187-SP_0036"/>
<dbReference type="EnsemblBacteria" id="AAK74226">
    <property type="protein sequence ID" value="AAK74226"/>
    <property type="gene ID" value="SP_0036"/>
</dbReference>
<dbReference type="GeneID" id="45652453"/>
<dbReference type="KEGG" id="spn:SP_0036"/>
<dbReference type="eggNOG" id="COG1381">
    <property type="taxonomic scope" value="Bacteria"/>
</dbReference>
<dbReference type="PhylomeDB" id="Q97TA7"/>
<dbReference type="BioCyc" id="SPNE170187:G1FZB-42-MONOMER"/>
<dbReference type="Proteomes" id="UP000000585">
    <property type="component" value="Chromosome"/>
</dbReference>
<dbReference type="GO" id="GO:0043590">
    <property type="term" value="C:bacterial nucleoid"/>
    <property type="evidence" value="ECO:0007669"/>
    <property type="project" value="TreeGrafter"/>
</dbReference>
<dbReference type="GO" id="GO:0006310">
    <property type="term" value="P:DNA recombination"/>
    <property type="evidence" value="ECO:0007669"/>
    <property type="project" value="UniProtKB-UniRule"/>
</dbReference>
<dbReference type="GO" id="GO:0006302">
    <property type="term" value="P:double-strand break repair"/>
    <property type="evidence" value="ECO:0007669"/>
    <property type="project" value="TreeGrafter"/>
</dbReference>
<dbReference type="Gene3D" id="2.40.50.140">
    <property type="entry name" value="Nucleic acid-binding proteins"/>
    <property type="match status" value="1"/>
</dbReference>
<dbReference type="Gene3D" id="1.20.1440.120">
    <property type="entry name" value="Recombination protein O, C-terminal domain"/>
    <property type="match status" value="1"/>
</dbReference>
<dbReference type="HAMAP" id="MF_00201">
    <property type="entry name" value="RecO"/>
    <property type="match status" value="1"/>
</dbReference>
<dbReference type="InterPro" id="IPR037278">
    <property type="entry name" value="ARFGAP/RecO"/>
</dbReference>
<dbReference type="InterPro" id="IPR022572">
    <property type="entry name" value="DNA_rep/recomb_RecO_N"/>
</dbReference>
<dbReference type="InterPro" id="IPR012340">
    <property type="entry name" value="NA-bd_OB-fold"/>
</dbReference>
<dbReference type="InterPro" id="IPR003717">
    <property type="entry name" value="RecO"/>
</dbReference>
<dbReference type="InterPro" id="IPR042242">
    <property type="entry name" value="RecO_C"/>
</dbReference>
<dbReference type="NCBIfam" id="TIGR00613">
    <property type="entry name" value="reco"/>
    <property type="match status" value="1"/>
</dbReference>
<dbReference type="PANTHER" id="PTHR33991">
    <property type="entry name" value="DNA REPAIR PROTEIN RECO"/>
    <property type="match status" value="1"/>
</dbReference>
<dbReference type="PANTHER" id="PTHR33991:SF1">
    <property type="entry name" value="DNA REPAIR PROTEIN RECO"/>
    <property type="match status" value="1"/>
</dbReference>
<dbReference type="Pfam" id="PF02565">
    <property type="entry name" value="RecO_C"/>
    <property type="match status" value="1"/>
</dbReference>
<dbReference type="Pfam" id="PF11967">
    <property type="entry name" value="RecO_N"/>
    <property type="match status" value="1"/>
</dbReference>
<dbReference type="SUPFAM" id="SSF57863">
    <property type="entry name" value="ArfGap/RecO-like zinc finger"/>
    <property type="match status" value="1"/>
</dbReference>
<dbReference type="SUPFAM" id="SSF50249">
    <property type="entry name" value="Nucleic acid-binding proteins"/>
    <property type="match status" value="1"/>
</dbReference>
<gene>
    <name type="primary">recO</name>
    <name type="ordered locus">SP_0036</name>
</gene>
<accession>Q97TA7</accession>
<keyword id="KW-0227">DNA damage</keyword>
<keyword id="KW-0233">DNA recombination</keyword>
<keyword id="KW-0234">DNA repair</keyword>
<keyword id="KW-1185">Reference proteome</keyword>
<organism>
    <name type="scientific">Streptococcus pneumoniae serotype 4 (strain ATCC BAA-334 / TIGR4)</name>
    <dbReference type="NCBI Taxonomy" id="170187"/>
    <lineage>
        <taxon>Bacteria</taxon>
        <taxon>Bacillati</taxon>
        <taxon>Bacillota</taxon>
        <taxon>Bacilli</taxon>
        <taxon>Lactobacillales</taxon>
        <taxon>Streptococcaceae</taxon>
        <taxon>Streptococcus</taxon>
    </lineage>
</organism>
<protein>
    <recommendedName>
        <fullName>DNA repair protein RecO</fullName>
    </recommendedName>
    <alternativeName>
        <fullName>Recombination protein O</fullName>
    </alternativeName>
</protein>
<proteinExistence type="inferred from homology"/>